<comment type="subcellular location">
    <subcellularLocation>
        <location evidence="1">Cytoplasm</location>
    </subcellularLocation>
</comment>
<comment type="similarity">
    <text evidence="1">Belongs to the UPF0291 family.</text>
</comment>
<protein>
    <recommendedName>
        <fullName evidence="1">UPF0291 protein SPH_1589</fullName>
    </recommendedName>
</protein>
<reference key="1">
    <citation type="journal article" date="2010" name="Genome Biol.">
        <title>Structure and dynamics of the pan-genome of Streptococcus pneumoniae and closely related species.</title>
        <authorList>
            <person name="Donati C."/>
            <person name="Hiller N.L."/>
            <person name="Tettelin H."/>
            <person name="Muzzi A."/>
            <person name="Croucher N.J."/>
            <person name="Angiuoli S.V."/>
            <person name="Oggioni M."/>
            <person name="Dunning Hotopp J.C."/>
            <person name="Hu F.Z."/>
            <person name="Riley D.R."/>
            <person name="Covacci A."/>
            <person name="Mitchell T.J."/>
            <person name="Bentley S.D."/>
            <person name="Kilian M."/>
            <person name="Ehrlich G.D."/>
            <person name="Rappuoli R."/>
            <person name="Moxon E.R."/>
            <person name="Masignani V."/>
        </authorList>
    </citation>
    <scope>NUCLEOTIDE SEQUENCE [LARGE SCALE GENOMIC DNA]</scope>
    <source>
        <strain>Hungary19A-6</strain>
    </source>
</reference>
<feature type="chain" id="PRO_1000137017" description="UPF0291 protein SPH_1589">
    <location>
        <begin position="1"/>
        <end position="85"/>
    </location>
</feature>
<feature type="region of interest" description="Disordered" evidence="2">
    <location>
        <begin position="62"/>
        <end position="85"/>
    </location>
</feature>
<proteinExistence type="inferred from homology"/>
<organism>
    <name type="scientific">Streptococcus pneumoniae (strain Hungary19A-6)</name>
    <dbReference type="NCBI Taxonomy" id="487214"/>
    <lineage>
        <taxon>Bacteria</taxon>
        <taxon>Bacillati</taxon>
        <taxon>Bacillota</taxon>
        <taxon>Bacilli</taxon>
        <taxon>Lactobacillales</taxon>
        <taxon>Streptococcaceae</taxon>
        <taxon>Streptococcus</taxon>
    </lineage>
</organism>
<sequence length="85" mass="9872">MDPKKIARINELAKKKKTEGLTPEEKVEQAKLREEYIEGYRRAVRHHIEGIKIVDEKGNDVTPEKLRQVQREKGLHGRSLDDPNS</sequence>
<gene>
    <name type="ordered locus">SPH_1589</name>
</gene>
<evidence type="ECO:0000255" key="1">
    <source>
        <dbReference type="HAMAP-Rule" id="MF_01103"/>
    </source>
</evidence>
<evidence type="ECO:0000256" key="2">
    <source>
        <dbReference type="SAM" id="MobiDB-lite"/>
    </source>
</evidence>
<keyword id="KW-0963">Cytoplasm</keyword>
<accession>B1ICQ4</accession>
<name>Y1589_STRPI</name>
<dbReference type="EMBL" id="CP000936">
    <property type="protein sequence ID" value="ACA36551.1"/>
    <property type="molecule type" value="Genomic_DNA"/>
</dbReference>
<dbReference type="RefSeq" id="WP_000371288.1">
    <property type="nucleotide sequence ID" value="NC_010380.1"/>
</dbReference>
<dbReference type="SMR" id="B1ICQ4"/>
<dbReference type="KEGG" id="spv:SPH_1589"/>
<dbReference type="HOGENOM" id="CLU_173137_0_2_9"/>
<dbReference type="Proteomes" id="UP000002163">
    <property type="component" value="Chromosome"/>
</dbReference>
<dbReference type="GO" id="GO:0005737">
    <property type="term" value="C:cytoplasm"/>
    <property type="evidence" value="ECO:0007669"/>
    <property type="project" value="UniProtKB-SubCell"/>
</dbReference>
<dbReference type="Gene3D" id="1.10.287.540">
    <property type="entry name" value="Helix hairpin bin"/>
    <property type="match status" value="1"/>
</dbReference>
<dbReference type="HAMAP" id="MF_01103">
    <property type="entry name" value="UPF0291"/>
    <property type="match status" value="1"/>
</dbReference>
<dbReference type="InterPro" id="IPR009242">
    <property type="entry name" value="DUF896"/>
</dbReference>
<dbReference type="NCBIfam" id="NF002711">
    <property type="entry name" value="PRK02539.1"/>
    <property type="match status" value="1"/>
</dbReference>
<dbReference type="PANTHER" id="PTHR37300">
    <property type="entry name" value="UPF0291 PROTEIN CBO2609/CLC_2481"/>
    <property type="match status" value="1"/>
</dbReference>
<dbReference type="PANTHER" id="PTHR37300:SF1">
    <property type="entry name" value="UPF0291 PROTEIN YNZC"/>
    <property type="match status" value="1"/>
</dbReference>
<dbReference type="Pfam" id="PF05979">
    <property type="entry name" value="DUF896"/>
    <property type="match status" value="1"/>
</dbReference>
<dbReference type="SUPFAM" id="SSF158221">
    <property type="entry name" value="YnzC-like"/>
    <property type="match status" value="1"/>
</dbReference>